<reference key="1">
    <citation type="submission" date="2010-04" db="EMBL/GenBank/DDBJ databases">
        <title>Full length sequence-verified cDNA sequences from Sitka spruce buds (Picea sitchensis).</title>
        <authorList>
            <person name="Reid K.E."/>
            <person name="Liao N."/>
            <person name="Chan S."/>
            <person name="Docking R."/>
            <person name="Taylor G."/>
            <person name="Moore R."/>
            <person name="Mayo M."/>
            <person name="Munro S."/>
            <person name="King J."/>
            <person name="Yanchuk A."/>
            <person name="Holt R."/>
            <person name="Jones S."/>
            <person name="Marra M."/>
            <person name="Ritland C.E."/>
            <person name="Ritland K."/>
            <person name="Bohlmann J."/>
        </authorList>
    </citation>
    <scope>NUCLEOTIDE SEQUENCE [LARGE SCALE MRNA]</scope>
    <source>
        <strain>cv. FB3-425</strain>
        <tissue>Axillary bud</tissue>
    </source>
</reference>
<reference key="2">
    <citation type="journal article" date="2014" name="Plant Physiol.">
        <title>Functional and evolutionary analysis of the CASPARIAN STRIP MEMBRANE DOMAIN PROTEIN family.</title>
        <authorList>
            <person name="Roppolo D."/>
            <person name="Boeckmann B."/>
            <person name="Pfister A."/>
            <person name="Boutet E."/>
            <person name="Rubio M.C."/>
            <person name="Denervaud-Tendon V."/>
            <person name="Vermeer J.E."/>
            <person name="Gheyselinck J."/>
            <person name="Xenarios I."/>
            <person name="Geldner N."/>
        </authorList>
    </citation>
    <scope>GENE FAMILY</scope>
    <scope>NOMENCLATURE</scope>
</reference>
<proteinExistence type="evidence at transcript level"/>
<accession>D5A972</accession>
<dbReference type="EMBL" id="BT122730">
    <property type="protein sequence ID" value="ADE76091.1"/>
    <property type="molecule type" value="mRNA"/>
</dbReference>
<dbReference type="SMR" id="D5A972"/>
<dbReference type="GO" id="GO:0005886">
    <property type="term" value="C:plasma membrane"/>
    <property type="evidence" value="ECO:0007669"/>
    <property type="project" value="UniProtKB-SubCell"/>
</dbReference>
<dbReference type="InterPro" id="IPR006459">
    <property type="entry name" value="CASP/CASPL"/>
</dbReference>
<dbReference type="InterPro" id="IPR006702">
    <property type="entry name" value="CASP_dom"/>
</dbReference>
<dbReference type="NCBIfam" id="TIGR01569">
    <property type="entry name" value="A_tha_TIGR01569"/>
    <property type="match status" value="1"/>
</dbReference>
<dbReference type="PANTHER" id="PTHR33573:SF46">
    <property type="entry name" value="CASP-LIKE PROTEIN 2A1"/>
    <property type="match status" value="1"/>
</dbReference>
<dbReference type="PANTHER" id="PTHR33573">
    <property type="entry name" value="CASP-LIKE PROTEIN 4A4"/>
    <property type="match status" value="1"/>
</dbReference>
<dbReference type="Pfam" id="PF04535">
    <property type="entry name" value="CASP_dom"/>
    <property type="match status" value="1"/>
</dbReference>
<organism>
    <name type="scientific">Picea sitchensis</name>
    <name type="common">Sitka spruce</name>
    <name type="synonym">Pinus sitchensis</name>
    <dbReference type="NCBI Taxonomy" id="3332"/>
    <lineage>
        <taxon>Eukaryota</taxon>
        <taxon>Viridiplantae</taxon>
        <taxon>Streptophyta</taxon>
        <taxon>Embryophyta</taxon>
        <taxon>Tracheophyta</taxon>
        <taxon>Spermatophyta</taxon>
        <taxon>Pinopsida</taxon>
        <taxon>Pinidae</taxon>
        <taxon>Conifers I</taxon>
        <taxon>Pinales</taxon>
        <taxon>Pinaceae</taxon>
        <taxon>Picea</taxon>
    </lineage>
</organism>
<keyword id="KW-1003">Cell membrane</keyword>
<keyword id="KW-0472">Membrane</keyword>
<keyword id="KW-0812">Transmembrane</keyword>
<keyword id="KW-1133">Transmembrane helix</keyword>
<sequence length="180" mass="20233">MELIYGSTMRKKWIEPALRFLPVGLCISALALMLKSKEGNENGILEYKHVGAFRYLAYANGICAAYSVLSTFNSVVPRSCSLSRAWFVFVFDQAFTYLMLGAGAVVTEVLYLAYKGDEKITWFEICPYYGRFCNRVAASLVISFLALLCFIPLSLISAYRVFSKYDPPSLCKKDQITSQS</sequence>
<evidence type="ECO:0000250" key="1"/>
<evidence type="ECO:0000255" key="2"/>
<evidence type="ECO:0000305" key="3"/>
<protein>
    <recommendedName>
        <fullName>CASP-like protein 2A3</fullName>
        <shortName>PsCASPL2A3</shortName>
    </recommendedName>
</protein>
<feature type="chain" id="PRO_0000412031" description="CASP-like protein 2A3">
    <location>
        <begin position="1"/>
        <end position="180"/>
    </location>
</feature>
<feature type="topological domain" description="Cytoplasmic" evidence="2">
    <location>
        <begin position="1"/>
        <end position="13"/>
    </location>
</feature>
<feature type="transmembrane region" description="Helical" evidence="2">
    <location>
        <begin position="14"/>
        <end position="34"/>
    </location>
</feature>
<feature type="topological domain" description="Extracellular" evidence="2">
    <location>
        <begin position="35"/>
        <end position="55"/>
    </location>
</feature>
<feature type="transmembrane region" description="Helical" evidence="2">
    <location>
        <begin position="56"/>
        <end position="76"/>
    </location>
</feature>
<feature type="topological domain" description="Cytoplasmic" evidence="2">
    <location>
        <begin position="77"/>
        <end position="85"/>
    </location>
</feature>
<feature type="transmembrane region" description="Helical" evidence="2">
    <location>
        <begin position="86"/>
        <end position="106"/>
    </location>
</feature>
<feature type="topological domain" description="Extracellular" evidence="2">
    <location>
        <begin position="107"/>
        <end position="135"/>
    </location>
</feature>
<feature type="transmembrane region" description="Helical" evidence="2">
    <location>
        <begin position="136"/>
        <end position="156"/>
    </location>
</feature>
<feature type="topological domain" description="Cytoplasmic" evidence="2">
    <location>
        <begin position="157"/>
        <end position="180"/>
    </location>
</feature>
<name>CSPL3_PICSI</name>
<comment type="subunit">
    <text evidence="1">Homodimer and heterodimers.</text>
</comment>
<comment type="subcellular location">
    <subcellularLocation>
        <location evidence="1">Cell membrane</location>
        <topology evidence="1">Multi-pass membrane protein</topology>
    </subcellularLocation>
</comment>
<comment type="similarity">
    <text evidence="3">Belongs to the Casparian strip membrane proteins (CASP) family.</text>
</comment>